<reference key="1">
    <citation type="journal article" date="2008" name="Environ. Microbiol.">
        <title>The complete genome sequence of Moorella thermoacetica (f. Clostridium thermoaceticum).</title>
        <authorList>
            <person name="Pierce E."/>
            <person name="Xie G."/>
            <person name="Barabote R.D."/>
            <person name="Saunders E."/>
            <person name="Han C.S."/>
            <person name="Detter J.C."/>
            <person name="Richardson P."/>
            <person name="Brettin T.S."/>
            <person name="Das A."/>
            <person name="Ljungdahl L.G."/>
            <person name="Ragsdale S.W."/>
        </authorList>
    </citation>
    <scope>NUCLEOTIDE SEQUENCE [LARGE SCALE GENOMIC DNA]</scope>
    <source>
        <strain>ATCC 39073 / JCM 9320</strain>
    </source>
</reference>
<feature type="chain" id="PRO_0000242841" description="ATP phosphoribosyltransferase regulatory subunit">
    <location>
        <begin position="1"/>
        <end position="389"/>
    </location>
</feature>
<organism>
    <name type="scientific">Moorella thermoacetica (strain ATCC 39073 / JCM 9320)</name>
    <dbReference type="NCBI Taxonomy" id="264732"/>
    <lineage>
        <taxon>Bacteria</taxon>
        <taxon>Bacillati</taxon>
        <taxon>Bacillota</taxon>
        <taxon>Clostridia</taxon>
        <taxon>Moorellales</taxon>
        <taxon>Moorellaceae</taxon>
        <taxon>Moorella</taxon>
    </lineage>
</organism>
<dbReference type="EMBL" id="CP000232">
    <property type="protein sequence ID" value="ABC20333.1"/>
    <property type="molecule type" value="Genomic_DNA"/>
</dbReference>
<dbReference type="RefSeq" id="YP_430876.1">
    <property type="nucleotide sequence ID" value="NC_007644.1"/>
</dbReference>
<dbReference type="SMR" id="Q2RGV6"/>
<dbReference type="STRING" id="264732.Moth_2037"/>
<dbReference type="EnsemblBacteria" id="ABC20333">
    <property type="protein sequence ID" value="ABC20333"/>
    <property type="gene ID" value="Moth_2037"/>
</dbReference>
<dbReference type="KEGG" id="mta:Moth_2037"/>
<dbReference type="PATRIC" id="fig|264732.11.peg.2213"/>
<dbReference type="eggNOG" id="COG3705">
    <property type="taxonomic scope" value="Bacteria"/>
</dbReference>
<dbReference type="HOGENOM" id="CLU_025113_0_2_9"/>
<dbReference type="OrthoDB" id="9800814at2"/>
<dbReference type="UniPathway" id="UPA00031">
    <property type="reaction ID" value="UER00006"/>
</dbReference>
<dbReference type="GO" id="GO:0005737">
    <property type="term" value="C:cytoplasm"/>
    <property type="evidence" value="ECO:0007669"/>
    <property type="project" value="UniProtKB-SubCell"/>
</dbReference>
<dbReference type="GO" id="GO:0140096">
    <property type="term" value="F:catalytic activity, acting on a protein"/>
    <property type="evidence" value="ECO:0007669"/>
    <property type="project" value="UniProtKB-ARBA"/>
</dbReference>
<dbReference type="GO" id="GO:0004821">
    <property type="term" value="F:histidine-tRNA ligase activity"/>
    <property type="evidence" value="ECO:0007669"/>
    <property type="project" value="TreeGrafter"/>
</dbReference>
<dbReference type="GO" id="GO:0016740">
    <property type="term" value="F:transferase activity"/>
    <property type="evidence" value="ECO:0007669"/>
    <property type="project" value="UniProtKB-ARBA"/>
</dbReference>
<dbReference type="GO" id="GO:0006427">
    <property type="term" value="P:histidyl-tRNA aminoacylation"/>
    <property type="evidence" value="ECO:0007669"/>
    <property type="project" value="TreeGrafter"/>
</dbReference>
<dbReference type="GO" id="GO:0000105">
    <property type="term" value="P:L-histidine biosynthetic process"/>
    <property type="evidence" value="ECO:0007669"/>
    <property type="project" value="UniProtKB-UniRule"/>
</dbReference>
<dbReference type="CDD" id="cd00773">
    <property type="entry name" value="HisRS-like_core"/>
    <property type="match status" value="1"/>
</dbReference>
<dbReference type="Gene3D" id="3.30.930.10">
    <property type="entry name" value="Bira Bifunctional Protein, Domain 2"/>
    <property type="match status" value="1"/>
</dbReference>
<dbReference type="HAMAP" id="MF_00125">
    <property type="entry name" value="HisZ"/>
    <property type="match status" value="1"/>
</dbReference>
<dbReference type="InterPro" id="IPR006195">
    <property type="entry name" value="aa-tRNA-synth_II"/>
</dbReference>
<dbReference type="InterPro" id="IPR045864">
    <property type="entry name" value="aa-tRNA-synth_II/BPL/LPL"/>
</dbReference>
<dbReference type="InterPro" id="IPR041715">
    <property type="entry name" value="HisRS-like_core"/>
</dbReference>
<dbReference type="InterPro" id="IPR004516">
    <property type="entry name" value="HisRS/HisZ"/>
</dbReference>
<dbReference type="InterPro" id="IPR004517">
    <property type="entry name" value="HisZ"/>
</dbReference>
<dbReference type="NCBIfam" id="TIGR00443">
    <property type="entry name" value="hisZ_biosyn_reg"/>
    <property type="match status" value="1"/>
</dbReference>
<dbReference type="PANTHER" id="PTHR43707:SF1">
    <property type="entry name" value="HISTIDINE--TRNA LIGASE, MITOCHONDRIAL-RELATED"/>
    <property type="match status" value="1"/>
</dbReference>
<dbReference type="PANTHER" id="PTHR43707">
    <property type="entry name" value="HISTIDYL-TRNA SYNTHETASE"/>
    <property type="match status" value="1"/>
</dbReference>
<dbReference type="Pfam" id="PF13393">
    <property type="entry name" value="tRNA-synt_His"/>
    <property type="match status" value="1"/>
</dbReference>
<dbReference type="PIRSF" id="PIRSF001549">
    <property type="entry name" value="His-tRNA_synth"/>
    <property type="match status" value="1"/>
</dbReference>
<dbReference type="SUPFAM" id="SSF55681">
    <property type="entry name" value="Class II aaRS and biotin synthetases"/>
    <property type="match status" value="1"/>
</dbReference>
<dbReference type="PROSITE" id="PS50862">
    <property type="entry name" value="AA_TRNA_LIGASE_II"/>
    <property type="match status" value="1"/>
</dbReference>
<proteinExistence type="inferred from homology"/>
<name>HISZ_MOOTA</name>
<sequence length="389" mass="41904">MASNLPLQLPAGVSDLLPPEAAALRQLEQRLLNCFRSWGYQEVMTPTFEFATTFQAGSPAGEEGALYKFIDRQGRVLALRPEMTAPIARLVATSLRRRELPLRLGYSARVFRYEEPQAGRRREFHQAGVELIGAGGVAGDVEIIALAVESLAQAGLEDFRLGLGQVAVTKGVLQDLALPPEAVAGIKSALASKDLVALERIYDEYHLEGERRRRLELLATIHGGREALEEARACFGRTAAAASLAELSRVWEALGAAGLEKWLFIDLGILRDFDYYTGIVFEGYVPGLGAPVCGGGRYDGLLAQFGYPCPATGFALGLERLLLARGETAPASLAGGYLVAGRDLAALLKRARELRSKGTAVVLDGESRSRQEAAARAAARGLNLEWIGE</sequence>
<comment type="function">
    <text evidence="1">Required for the first step of histidine biosynthesis. May allow the feedback regulation of ATP phosphoribosyltransferase activity by histidine.</text>
</comment>
<comment type="pathway">
    <text evidence="1">Amino-acid biosynthesis; L-histidine biosynthesis; L-histidine from 5-phospho-alpha-D-ribose 1-diphosphate: step 1/9.</text>
</comment>
<comment type="subunit">
    <text evidence="1">Heteromultimer composed of HisG and HisZ subunits.</text>
</comment>
<comment type="subcellular location">
    <subcellularLocation>
        <location evidence="1">Cytoplasm</location>
    </subcellularLocation>
</comment>
<comment type="miscellaneous">
    <text>This function is generally fulfilled by the C-terminal part of HisG, which is missing in some bacteria such as this one.</text>
</comment>
<comment type="similarity">
    <text evidence="1">Belongs to the class-II aminoacyl-tRNA synthetase family. HisZ subfamily.</text>
</comment>
<gene>
    <name evidence="1" type="primary">hisZ</name>
    <name type="ordered locus">Moth_2037</name>
</gene>
<evidence type="ECO:0000255" key="1">
    <source>
        <dbReference type="HAMAP-Rule" id="MF_00125"/>
    </source>
</evidence>
<accession>Q2RGV6</accession>
<keyword id="KW-0028">Amino-acid biosynthesis</keyword>
<keyword id="KW-0963">Cytoplasm</keyword>
<keyword id="KW-0368">Histidine biosynthesis</keyword>
<protein>
    <recommendedName>
        <fullName evidence="1">ATP phosphoribosyltransferase regulatory subunit</fullName>
    </recommendedName>
</protein>